<comment type="similarity">
    <text evidence="1">Belongs to the UPF0250 family.</text>
</comment>
<gene>
    <name type="ordered locus">swp_3927</name>
</gene>
<feature type="chain" id="PRO_1000131261" description="UPF0250 protein swp_3927">
    <location>
        <begin position="1"/>
        <end position="88"/>
    </location>
</feature>
<protein>
    <recommendedName>
        <fullName evidence="1">UPF0250 protein swp_3927</fullName>
    </recommendedName>
</protein>
<proteinExistence type="inferred from homology"/>
<sequence length="88" mass="9677">MLDTKFDELMEFPASFPFKVVGDASDTLQDRVVAVVQGLAPGDYAPSTKASSKGTYYSVTIRVTVTSKEQIEKLYTQLAELEGVKRVL</sequence>
<organism>
    <name type="scientific">Shewanella piezotolerans (strain WP3 / JCM 13877)</name>
    <dbReference type="NCBI Taxonomy" id="225849"/>
    <lineage>
        <taxon>Bacteria</taxon>
        <taxon>Pseudomonadati</taxon>
        <taxon>Pseudomonadota</taxon>
        <taxon>Gammaproteobacteria</taxon>
        <taxon>Alteromonadales</taxon>
        <taxon>Shewanellaceae</taxon>
        <taxon>Shewanella</taxon>
    </lineage>
</organism>
<name>Y3927_SHEPW</name>
<accession>B8CSH5</accession>
<dbReference type="EMBL" id="CP000472">
    <property type="protein sequence ID" value="ACJ30601.1"/>
    <property type="molecule type" value="Genomic_DNA"/>
</dbReference>
<dbReference type="RefSeq" id="WP_020913943.1">
    <property type="nucleotide sequence ID" value="NC_011566.1"/>
</dbReference>
<dbReference type="SMR" id="B8CSH5"/>
<dbReference type="STRING" id="225849.swp_3927"/>
<dbReference type="KEGG" id="swp:swp_3927"/>
<dbReference type="eggNOG" id="COG2921">
    <property type="taxonomic scope" value="Bacteria"/>
</dbReference>
<dbReference type="HOGENOM" id="CLU_161438_2_1_6"/>
<dbReference type="OrthoDB" id="9793424at2"/>
<dbReference type="Proteomes" id="UP000000753">
    <property type="component" value="Chromosome"/>
</dbReference>
<dbReference type="GO" id="GO:0005829">
    <property type="term" value="C:cytosol"/>
    <property type="evidence" value="ECO:0007669"/>
    <property type="project" value="TreeGrafter"/>
</dbReference>
<dbReference type="Gene3D" id="3.30.70.260">
    <property type="match status" value="1"/>
</dbReference>
<dbReference type="HAMAP" id="MF_00659">
    <property type="entry name" value="UPF0250"/>
    <property type="match status" value="1"/>
</dbReference>
<dbReference type="InterPro" id="IPR007454">
    <property type="entry name" value="UPF0250_YbeD-like"/>
</dbReference>
<dbReference type="InterPro" id="IPR027471">
    <property type="entry name" value="YbeD-like_sf"/>
</dbReference>
<dbReference type="NCBIfam" id="NF003447">
    <property type="entry name" value="PRK04998.1"/>
    <property type="match status" value="1"/>
</dbReference>
<dbReference type="PANTHER" id="PTHR38036">
    <property type="entry name" value="UPF0250 PROTEIN YBED"/>
    <property type="match status" value="1"/>
</dbReference>
<dbReference type="PANTHER" id="PTHR38036:SF1">
    <property type="entry name" value="UPF0250 PROTEIN YBED"/>
    <property type="match status" value="1"/>
</dbReference>
<dbReference type="Pfam" id="PF04359">
    <property type="entry name" value="DUF493"/>
    <property type="match status" value="1"/>
</dbReference>
<dbReference type="SUPFAM" id="SSF117991">
    <property type="entry name" value="YbeD/HP0495-like"/>
    <property type="match status" value="1"/>
</dbReference>
<reference key="1">
    <citation type="journal article" date="2008" name="PLoS ONE">
        <title>Environmental adaptation: genomic analysis of the piezotolerant and psychrotolerant deep-sea iron reducing bacterium Shewanella piezotolerans WP3.</title>
        <authorList>
            <person name="Wang F."/>
            <person name="Wang J."/>
            <person name="Jian H."/>
            <person name="Zhang B."/>
            <person name="Li S."/>
            <person name="Wang F."/>
            <person name="Zeng X."/>
            <person name="Gao L."/>
            <person name="Bartlett D.H."/>
            <person name="Yu J."/>
            <person name="Hu S."/>
            <person name="Xiao X."/>
        </authorList>
    </citation>
    <scope>NUCLEOTIDE SEQUENCE [LARGE SCALE GENOMIC DNA]</scope>
    <source>
        <strain>WP3 / JCM 13877</strain>
    </source>
</reference>
<evidence type="ECO:0000255" key="1">
    <source>
        <dbReference type="HAMAP-Rule" id="MF_00659"/>
    </source>
</evidence>